<keyword id="KW-0028">Amino-acid biosynthesis</keyword>
<keyword id="KW-0963">Cytoplasm</keyword>
<keyword id="KW-0220">Diaminopimelate biosynthesis</keyword>
<keyword id="KW-0457">Lysine biosynthesis</keyword>
<keyword id="KW-0520">NAD</keyword>
<keyword id="KW-0521">NADP</keyword>
<keyword id="KW-0560">Oxidoreductase</keyword>
<protein>
    <recommendedName>
        <fullName evidence="1">4-hydroxy-tetrahydrodipicolinate reductase</fullName>
        <shortName evidence="1">HTPA reductase</shortName>
        <ecNumber evidence="1">1.17.1.8</ecNumber>
    </recommendedName>
</protein>
<accession>Q5X8U7</accession>
<sequence length="243" mass="26519">MRTRVIVNGANGKMGILACETLENHEQFEVVAKLSRQDNLGQSILDTKAQIVVDLTRADCVYENSLTIINHGARPVIGTSGLVETQINELTKLCEIKQIGGIIAPNFSLGAILMMMLATKASEYFSEVEIIEGHHQQKLDAPSGTALKTAEMIAAARKKPKNKLPLKELTPGARGGSHHDINIHSLRLPGLLARQEVLFGNIGETLSITHNSIDRRCFMPGIVLACQKVLNLTNLVYGLEHLL</sequence>
<proteinExistence type="inferred from homology"/>
<organism>
    <name type="scientific">Legionella pneumophila (strain Paris)</name>
    <dbReference type="NCBI Taxonomy" id="297246"/>
    <lineage>
        <taxon>Bacteria</taxon>
        <taxon>Pseudomonadati</taxon>
        <taxon>Pseudomonadota</taxon>
        <taxon>Gammaproteobacteria</taxon>
        <taxon>Legionellales</taxon>
        <taxon>Legionellaceae</taxon>
        <taxon>Legionella</taxon>
    </lineage>
</organism>
<dbReference type="EC" id="1.17.1.8" evidence="1"/>
<dbReference type="EMBL" id="CR628336">
    <property type="protein sequence ID" value="CAH11294.1"/>
    <property type="molecule type" value="Genomic_DNA"/>
</dbReference>
<dbReference type="RefSeq" id="WP_011212781.1">
    <property type="nucleotide sequence ID" value="NC_006368.1"/>
</dbReference>
<dbReference type="SMR" id="Q5X8U7"/>
<dbReference type="KEGG" id="lpp:lpp0146"/>
<dbReference type="LegioList" id="lpp0146"/>
<dbReference type="HOGENOM" id="CLU_047479_0_1_6"/>
<dbReference type="UniPathway" id="UPA00034">
    <property type="reaction ID" value="UER00018"/>
</dbReference>
<dbReference type="GO" id="GO:0005829">
    <property type="term" value="C:cytosol"/>
    <property type="evidence" value="ECO:0007669"/>
    <property type="project" value="TreeGrafter"/>
</dbReference>
<dbReference type="GO" id="GO:0008839">
    <property type="term" value="F:4-hydroxy-tetrahydrodipicolinate reductase"/>
    <property type="evidence" value="ECO:0007669"/>
    <property type="project" value="UniProtKB-EC"/>
</dbReference>
<dbReference type="GO" id="GO:0051287">
    <property type="term" value="F:NAD binding"/>
    <property type="evidence" value="ECO:0007669"/>
    <property type="project" value="UniProtKB-UniRule"/>
</dbReference>
<dbReference type="GO" id="GO:0050661">
    <property type="term" value="F:NADP binding"/>
    <property type="evidence" value="ECO:0007669"/>
    <property type="project" value="UniProtKB-UniRule"/>
</dbReference>
<dbReference type="GO" id="GO:0016726">
    <property type="term" value="F:oxidoreductase activity, acting on CH or CH2 groups, NAD or NADP as acceptor"/>
    <property type="evidence" value="ECO:0007669"/>
    <property type="project" value="UniProtKB-UniRule"/>
</dbReference>
<dbReference type="GO" id="GO:0019877">
    <property type="term" value="P:diaminopimelate biosynthetic process"/>
    <property type="evidence" value="ECO:0007669"/>
    <property type="project" value="UniProtKB-UniRule"/>
</dbReference>
<dbReference type="GO" id="GO:0009089">
    <property type="term" value="P:lysine biosynthetic process via diaminopimelate"/>
    <property type="evidence" value="ECO:0007669"/>
    <property type="project" value="UniProtKB-UniRule"/>
</dbReference>
<dbReference type="CDD" id="cd02274">
    <property type="entry name" value="DHDPR_N"/>
    <property type="match status" value="1"/>
</dbReference>
<dbReference type="FunFam" id="3.30.360.10:FF:000009">
    <property type="entry name" value="4-hydroxy-tetrahydrodipicolinate reductase"/>
    <property type="match status" value="1"/>
</dbReference>
<dbReference type="Gene3D" id="3.30.360.10">
    <property type="entry name" value="Dihydrodipicolinate Reductase, domain 2"/>
    <property type="match status" value="1"/>
</dbReference>
<dbReference type="Gene3D" id="3.40.50.720">
    <property type="entry name" value="NAD(P)-binding Rossmann-like Domain"/>
    <property type="match status" value="1"/>
</dbReference>
<dbReference type="HAMAP" id="MF_00102">
    <property type="entry name" value="DapB"/>
    <property type="match status" value="1"/>
</dbReference>
<dbReference type="InterPro" id="IPR022663">
    <property type="entry name" value="DapB_C"/>
</dbReference>
<dbReference type="InterPro" id="IPR000846">
    <property type="entry name" value="DapB_N"/>
</dbReference>
<dbReference type="InterPro" id="IPR022664">
    <property type="entry name" value="DapB_N_CS"/>
</dbReference>
<dbReference type="InterPro" id="IPR023940">
    <property type="entry name" value="DHDPR_bac"/>
</dbReference>
<dbReference type="InterPro" id="IPR036291">
    <property type="entry name" value="NAD(P)-bd_dom_sf"/>
</dbReference>
<dbReference type="NCBIfam" id="TIGR00036">
    <property type="entry name" value="dapB"/>
    <property type="match status" value="1"/>
</dbReference>
<dbReference type="PANTHER" id="PTHR20836:SF0">
    <property type="entry name" value="4-HYDROXY-TETRAHYDRODIPICOLINATE REDUCTASE 1, CHLOROPLASTIC-RELATED"/>
    <property type="match status" value="1"/>
</dbReference>
<dbReference type="PANTHER" id="PTHR20836">
    <property type="entry name" value="DIHYDRODIPICOLINATE REDUCTASE"/>
    <property type="match status" value="1"/>
</dbReference>
<dbReference type="Pfam" id="PF05173">
    <property type="entry name" value="DapB_C"/>
    <property type="match status" value="1"/>
</dbReference>
<dbReference type="Pfam" id="PF01113">
    <property type="entry name" value="DapB_N"/>
    <property type="match status" value="1"/>
</dbReference>
<dbReference type="PIRSF" id="PIRSF000161">
    <property type="entry name" value="DHPR"/>
    <property type="match status" value="1"/>
</dbReference>
<dbReference type="SUPFAM" id="SSF55347">
    <property type="entry name" value="Glyceraldehyde-3-phosphate dehydrogenase-like, C-terminal domain"/>
    <property type="match status" value="1"/>
</dbReference>
<dbReference type="SUPFAM" id="SSF51735">
    <property type="entry name" value="NAD(P)-binding Rossmann-fold domains"/>
    <property type="match status" value="1"/>
</dbReference>
<dbReference type="PROSITE" id="PS01298">
    <property type="entry name" value="DAPB"/>
    <property type="match status" value="1"/>
</dbReference>
<reference key="1">
    <citation type="journal article" date="2004" name="Nat. Genet.">
        <title>Evidence in the Legionella pneumophila genome for exploitation of host cell functions and high genome plasticity.</title>
        <authorList>
            <person name="Cazalet C."/>
            <person name="Rusniok C."/>
            <person name="Brueggemann H."/>
            <person name="Zidane N."/>
            <person name="Magnier A."/>
            <person name="Ma L."/>
            <person name="Tichit M."/>
            <person name="Jarraud S."/>
            <person name="Bouchier C."/>
            <person name="Vandenesch F."/>
            <person name="Kunst F."/>
            <person name="Etienne J."/>
            <person name="Glaser P."/>
            <person name="Buchrieser C."/>
        </authorList>
    </citation>
    <scope>NUCLEOTIDE SEQUENCE [LARGE SCALE GENOMIC DNA]</scope>
    <source>
        <strain>Paris</strain>
    </source>
</reference>
<comment type="function">
    <text evidence="1">Catalyzes the conversion of 4-hydroxy-tetrahydrodipicolinate (HTPA) to tetrahydrodipicolinate.</text>
</comment>
<comment type="catalytic activity">
    <reaction evidence="1">
        <text>(S)-2,3,4,5-tetrahydrodipicolinate + NAD(+) + H2O = (2S,4S)-4-hydroxy-2,3,4,5-tetrahydrodipicolinate + NADH + H(+)</text>
        <dbReference type="Rhea" id="RHEA:35323"/>
        <dbReference type="ChEBI" id="CHEBI:15377"/>
        <dbReference type="ChEBI" id="CHEBI:15378"/>
        <dbReference type="ChEBI" id="CHEBI:16845"/>
        <dbReference type="ChEBI" id="CHEBI:57540"/>
        <dbReference type="ChEBI" id="CHEBI:57945"/>
        <dbReference type="ChEBI" id="CHEBI:67139"/>
        <dbReference type="EC" id="1.17.1.8"/>
    </reaction>
</comment>
<comment type="catalytic activity">
    <reaction evidence="1">
        <text>(S)-2,3,4,5-tetrahydrodipicolinate + NADP(+) + H2O = (2S,4S)-4-hydroxy-2,3,4,5-tetrahydrodipicolinate + NADPH + H(+)</text>
        <dbReference type="Rhea" id="RHEA:35331"/>
        <dbReference type="ChEBI" id="CHEBI:15377"/>
        <dbReference type="ChEBI" id="CHEBI:15378"/>
        <dbReference type="ChEBI" id="CHEBI:16845"/>
        <dbReference type="ChEBI" id="CHEBI:57783"/>
        <dbReference type="ChEBI" id="CHEBI:58349"/>
        <dbReference type="ChEBI" id="CHEBI:67139"/>
        <dbReference type="EC" id="1.17.1.8"/>
    </reaction>
</comment>
<comment type="pathway">
    <text evidence="1">Amino-acid biosynthesis; L-lysine biosynthesis via DAP pathway; (S)-tetrahydrodipicolinate from L-aspartate: step 4/4.</text>
</comment>
<comment type="subcellular location">
    <subcellularLocation>
        <location evidence="1">Cytoplasm</location>
    </subcellularLocation>
</comment>
<comment type="similarity">
    <text evidence="1">Belongs to the DapB family.</text>
</comment>
<comment type="caution">
    <text evidence="2">Was originally thought to be a dihydrodipicolinate reductase (DHDPR), catalyzing the conversion of dihydrodipicolinate to tetrahydrodipicolinate. However, it was shown in E.coli that the substrate of the enzymatic reaction is not dihydrodipicolinate (DHDP) but in fact (2S,4S)-4-hydroxy-2,3,4,5-tetrahydrodipicolinic acid (HTPA), the product released by the DapA-catalyzed reaction.</text>
</comment>
<evidence type="ECO:0000255" key="1">
    <source>
        <dbReference type="HAMAP-Rule" id="MF_00102"/>
    </source>
</evidence>
<evidence type="ECO:0000305" key="2"/>
<gene>
    <name evidence="1" type="primary">dapB</name>
    <name type="ordered locus">lpp0146</name>
</gene>
<name>DAPB_LEGPA</name>
<feature type="chain" id="PRO_0000228359" description="4-hydroxy-tetrahydrodipicolinate reductase">
    <location>
        <begin position="1"/>
        <end position="243"/>
    </location>
</feature>
<feature type="active site" description="Proton donor/acceptor" evidence="1">
    <location>
        <position position="134"/>
    </location>
</feature>
<feature type="active site" description="Proton donor" evidence="1">
    <location>
        <position position="138"/>
    </location>
</feature>
<feature type="binding site" evidence="1">
    <location>
        <begin position="9"/>
        <end position="14"/>
    </location>
    <ligand>
        <name>NAD(+)</name>
        <dbReference type="ChEBI" id="CHEBI:57540"/>
    </ligand>
</feature>
<feature type="binding site" evidence="1">
    <location>
        <begin position="78"/>
        <end position="80"/>
    </location>
    <ligand>
        <name>NAD(+)</name>
        <dbReference type="ChEBI" id="CHEBI:57540"/>
    </ligand>
</feature>
<feature type="binding site" evidence="1">
    <location>
        <begin position="104"/>
        <end position="107"/>
    </location>
    <ligand>
        <name>NAD(+)</name>
        <dbReference type="ChEBI" id="CHEBI:57540"/>
    </ligand>
</feature>
<feature type="binding site" evidence="1">
    <location>
        <position position="135"/>
    </location>
    <ligand>
        <name>(S)-2,3,4,5-tetrahydrodipicolinate</name>
        <dbReference type="ChEBI" id="CHEBI:16845"/>
    </ligand>
</feature>
<feature type="binding site" evidence="1">
    <location>
        <begin position="144"/>
        <end position="145"/>
    </location>
    <ligand>
        <name>(S)-2,3,4,5-tetrahydrodipicolinate</name>
        <dbReference type="ChEBI" id="CHEBI:16845"/>
    </ligand>
</feature>